<evidence type="ECO:0000255" key="1">
    <source>
        <dbReference type="HAMAP-Rule" id="MF_00171"/>
    </source>
</evidence>
<proteinExistence type="inferred from homology"/>
<feature type="chain" id="PRO_1000097778" description="tRNA pseudouridine synthase A">
    <location>
        <begin position="1"/>
        <end position="270"/>
    </location>
</feature>
<feature type="active site" description="Nucleophile" evidence="1">
    <location>
        <position position="60"/>
    </location>
</feature>
<feature type="binding site" evidence="1">
    <location>
        <position position="118"/>
    </location>
    <ligand>
        <name>substrate</name>
    </ligand>
</feature>
<reference key="1">
    <citation type="journal article" date="2011" name="J. Bacteriol.">
        <title>Comparative genomics of 28 Salmonella enterica isolates: evidence for CRISPR-mediated adaptive sublineage evolution.</title>
        <authorList>
            <person name="Fricke W.F."/>
            <person name="Mammel M.K."/>
            <person name="McDermott P.F."/>
            <person name="Tartera C."/>
            <person name="White D.G."/>
            <person name="Leclerc J.E."/>
            <person name="Ravel J."/>
            <person name="Cebula T.A."/>
        </authorList>
    </citation>
    <scope>NUCLEOTIDE SEQUENCE [LARGE SCALE GENOMIC DNA]</scope>
    <source>
        <strain>CT_02021853</strain>
    </source>
</reference>
<keyword id="KW-0413">Isomerase</keyword>
<keyword id="KW-0819">tRNA processing</keyword>
<protein>
    <recommendedName>
        <fullName evidence="1">tRNA pseudouridine synthase A</fullName>
        <ecNumber evidence="1">5.4.99.12</ecNumber>
    </recommendedName>
    <alternativeName>
        <fullName evidence="1">tRNA pseudouridine(38-40) synthase</fullName>
    </alternativeName>
    <alternativeName>
        <fullName evidence="1">tRNA pseudouridylate synthase I</fullName>
    </alternativeName>
    <alternativeName>
        <fullName evidence="1">tRNA-uridine isomerase I</fullName>
    </alternativeName>
</protein>
<name>TRUA_SALDC</name>
<gene>
    <name evidence="1" type="primary">truA</name>
    <name type="ordered locus">SeD_A2719</name>
</gene>
<organism>
    <name type="scientific">Salmonella dublin (strain CT_02021853)</name>
    <dbReference type="NCBI Taxonomy" id="439851"/>
    <lineage>
        <taxon>Bacteria</taxon>
        <taxon>Pseudomonadati</taxon>
        <taxon>Pseudomonadota</taxon>
        <taxon>Gammaproteobacteria</taxon>
        <taxon>Enterobacterales</taxon>
        <taxon>Enterobacteriaceae</taxon>
        <taxon>Salmonella</taxon>
    </lineage>
</organism>
<comment type="function">
    <text evidence="1">Formation of pseudouridine at positions 38, 39 and 40 in the anticodon stem and loop of transfer RNAs.</text>
</comment>
<comment type="catalytic activity">
    <reaction evidence="1">
        <text>uridine(38/39/40) in tRNA = pseudouridine(38/39/40) in tRNA</text>
        <dbReference type="Rhea" id="RHEA:22376"/>
        <dbReference type="Rhea" id="RHEA-COMP:10085"/>
        <dbReference type="Rhea" id="RHEA-COMP:10087"/>
        <dbReference type="ChEBI" id="CHEBI:65314"/>
        <dbReference type="ChEBI" id="CHEBI:65315"/>
        <dbReference type="EC" id="5.4.99.12"/>
    </reaction>
</comment>
<comment type="subunit">
    <text evidence="1">Homodimer.</text>
</comment>
<comment type="similarity">
    <text evidence="1">Belongs to the tRNA pseudouridine synthase TruA family.</text>
</comment>
<accession>B5FPL2</accession>
<dbReference type="EC" id="5.4.99.12" evidence="1"/>
<dbReference type="EMBL" id="CP001144">
    <property type="protein sequence ID" value="ACH77846.1"/>
    <property type="molecule type" value="Genomic_DNA"/>
</dbReference>
<dbReference type="RefSeq" id="WP_000016631.1">
    <property type="nucleotide sequence ID" value="NC_011205.1"/>
</dbReference>
<dbReference type="SMR" id="B5FPL2"/>
<dbReference type="KEGG" id="sed:SeD_A2719"/>
<dbReference type="HOGENOM" id="CLU_014673_0_2_6"/>
<dbReference type="Proteomes" id="UP000008322">
    <property type="component" value="Chromosome"/>
</dbReference>
<dbReference type="GO" id="GO:0003723">
    <property type="term" value="F:RNA binding"/>
    <property type="evidence" value="ECO:0007669"/>
    <property type="project" value="InterPro"/>
</dbReference>
<dbReference type="GO" id="GO:0160147">
    <property type="term" value="F:tRNA pseudouridine(38-40) synthase activity"/>
    <property type="evidence" value="ECO:0007669"/>
    <property type="project" value="UniProtKB-EC"/>
</dbReference>
<dbReference type="GO" id="GO:0031119">
    <property type="term" value="P:tRNA pseudouridine synthesis"/>
    <property type="evidence" value="ECO:0007669"/>
    <property type="project" value="UniProtKB-UniRule"/>
</dbReference>
<dbReference type="CDD" id="cd02570">
    <property type="entry name" value="PseudoU_synth_EcTruA"/>
    <property type="match status" value="1"/>
</dbReference>
<dbReference type="FunFam" id="3.30.70.580:FF:000001">
    <property type="entry name" value="tRNA pseudouridine synthase A"/>
    <property type="match status" value="1"/>
</dbReference>
<dbReference type="FunFam" id="3.30.70.660:FF:000001">
    <property type="entry name" value="tRNA pseudouridine synthase A"/>
    <property type="match status" value="1"/>
</dbReference>
<dbReference type="Gene3D" id="3.30.70.660">
    <property type="entry name" value="Pseudouridine synthase I, catalytic domain, C-terminal subdomain"/>
    <property type="match status" value="1"/>
</dbReference>
<dbReference type="Gene3D" id="3.30.70.580">
    <property type="entry name" value="Pseudouridine synthase I, catalytic domain, N-terminal subdomain"/>
    <property type="match status" value="1"/>
</dbReference>
<dbReference type="HAMAP" id="MF_00171">
    <property type="entry name" value="TruA"/>
    <property type="match status" value="1"/>
</dbReference>
<dbReference type="InterPro" id="IPR020103">
    <property type="entry name" value="PsdUridine_synth_cat_dom_sf"/>
</dbReference>
<dbReference type="InterPro" id="IPR001406">
    <property type="entry name" value="PsdUridine_synth_TruA"/>
</dbReference>
<dbReference type="InterPro" id="IPR020097">
    <property type="entry name" value="PsdUridine_synth_TruA_a/b_dom"/>
</dbReference>
<dbReference type="InterPro" id="IPR020095">
    <property type="entry name" value="PsdUridine_synth_TruA_C"/>
</dbReference>
<dbReference type="InterPro" id="IPR020094">
    <property type="entry name" value="TruA/RsuA/RluB/E/F_N"/>
</dbReference>
<dbReference type="NCBIfam" id="TIGR00071">
    <property type="entry name" value="hisT_truA"/>
    <property type="match status" value="1"/>
</dbReference>
<dbReference type="PANTHER" id="PTHR11142">
    <property type="entry name" value="PSEUDOURIDYLATE SYNTHASE"/>
    <property type="match status" value="1"/>
</dbReference>
<dbReference type="PANTHER" id="PTHR11142:SF0">
    <property type="entry name" value="TRNA PSEUDOURIDINE SYNTHASE-LIKE 1"/>
    <property type="match status" value="1"/>
</dbReference>
<dbReference type="Pfam" id="PF01416">
    <property type="entry name" value="PseudoU_synth_1"/>
    <property type="match status" value="2"/>
</dbReference>
<dbReference type="PIRSF" id="PIRSF001430">
    <property type="entry name" value="tRNA_psdUrid_synth"/>
    <property type="match status" value="1"/>
</dbReference>
<dbReference type="SUPFAM" id="SSF55120">
    <property type="entry name" value="Pseudouridine synthase"/>
    <property type="match status" value="1"/>
</dbReference>
<sequence>MSGQQSSPVYKIALGIEYDGSKYYGWQRQNEVRSVQEKLEKALSQVANEPINVFCAGRTDAGVHGTGQVVHFETTALRKDAAWTLGVNANLPGDIAVRWVKTVPDDFHARFSATARRYRYIIYNHRLRPAVLAKGVTHYYEPLDAERMHRAAQCLLGENDFTSFRAVQCQSRTPWRNVMHINVTRHGPYVVVDIKANAFVHHMVRNIVGSLLEVGAHNQPESWIAELLAARDRTLAAATAKAEGLYLVAVDYPDRFDLPKPPMGPLFLAD</sequence>